<protein>
    <recommendedName>
        <fullName>Bone morphogenetic protein 3</fullName>
        <shortName>BMP-3</shortName>
    </recommendedName>
    <alternativeName>
        <fullName>Bone morphogenetic protein 3A</fullName>
        <shortName>BMP-3A</shortName>
    </alternativeName>
    <alternativeName>
        <fullName>Osteogenin</fullName>
    </alternativeName>
</protein>
<sequence length="472" mass="53372">MAGASRLLFLWLGCFCVSLAQGERPKPPFPELRKAVPGDRTAGGGPDSELQPQDKVSEHMLRLYDRYSTVQAARTPGSLEGGSQPWRPRLLREGNTVRSFRAAAAETLERKGLYIFNLTSLTKSENILSATLYFCIGELGNISLSCPVSGGCSHHAQRKHIQIDLSAWTLKFSRNQSQLLGHLSVDMAKSHRDIMSWLSKDITQLLRKAKENEEFLIGFNITSKGRQLPKRRLPFPEPYILVYANDAAISEPESVVSSLQGHRNFPTGTVPKWDSHIRAALSIERRKKRSTGVLLPLQNNELPGAEYQYKKDEVWEERKPYKTLQAQAPEKSKNKKKQRKGPHRKSQTLQFDEQTLKKARRKQWIEPRNCARRYLKVDFADIGWSEWIISPKSFDAYYCSGACQFPMPKSLKPSNHATIQSIVRAVGVVPGIPEPCCVPEKMSSLSILFFDENKNVVLKVYPNMTVESCACR</sequence>
<proteinExistence type="evidence at protein level"/>
<organism>
    <name type="scientific">Homo sapiens</name>
    <name type="common">Human</name>
    <dbReference type="NCBI Taxonomy" id="9606"/>
    <lineage>
        <taxon>Eukaryota</taxon>
        <taxon>Metazoa</taxon>
        <taxon>Chordata</taxon>
        <taxon>Craniata</taxon>
        <taxon>Vertebrata</taxon>
        <taxon>Euteleostomi</taxon>
        <taxon>Mammalia</taxon>
        <taxon>Eutheria</taxon>
        <taxon>Euarchontoglires</taxon>
        <taxon>Primates</taxon>
        <taxon>Haplorrhini</taxon>
        <taxon>Catarrhini</taxon>
        <taxon>Hominidae</taxon>
        <taxon>Homo</taxon>
    </lineage>
</organism>
<dbReference type="EMBL" id="M22491">
    <property type="protein sequence ID" value="AAA51836.1"/>
    <property type="molecule type" value="mRNA"/>
</dbReference>
<dbReference type="EMBL" id="AC093883">
    <property type="status" value="NOT_ANNOTATED_CDS"/>
    <property type="molecule type" value="Genomic_DNA"/>
</dbReference>
<dbReference type="EMBL" id="BC096269">
    <property type="protein sequence ID" value="AAH96269.1"/>
    <property type="molecule type" value="mRNA"/>
</dbReference>
<dbReference type="EMBL" id="BC096270">
    <property type="protein sequence ID" value="AAH96270.1"/>
    <property type="molecule type" value="mRNA"/>
</dbReference>
<dbReference type="EMBL" id="BC096271">
    <property type="protein sequence ID" value="AAH96271.1"/>
    <property type="molecule type" value="mRNA"/>
</dbReference>
<dbReference type="EMBL" id="BC117514">
    <property type="protein sequence ID" value="AAI17515.1"/>
    <property type="molecule type" value="mRNA"/>
</dbReference>
<dbReference type="CCDS" id="CCDS3588.1"/>
<dbReference type="PIR" id="D37278">
    <property type="entry name" value="BMHU3"/>
</dbReference>
<dbReference type="RefSeq" id="NP_001192.4">
    <property type="nucleotide sequence ID" value="NM_001201.5"/>
</dbReference>
<dbReference type="PDB" id="2QCQ">
    <property type="method" value="X-ray"/>
    <property type="resolution" value="2.21 A"/>
    <property type="chains" value="A/B=363-472"/>
</dbReference>
<dbReference type="PDBsum" id="2QCQ"/>
<dbReference type="SMR" id="P12645"/>
<dbReference type="BioGRID" id="107119">
    <property type="interactions" value="3"/>
</dbReference>
<dbReference type="FunCoup" id="P12645">
    <property type="interactions" value="433"/>
</dbReference>
<dbReference type="IntAct" id="P12645">
    <property type="interactions" value="5"/>
</dbReference>
<dbReference type="MINT" id="P12645"/>
<dbReference type="STRING" id="9606.ENSP00000282701"/>
<dbReference type="GlyCosmos" id="P12645">
    <property type="glycosylation" value="5 sites, No reported glycans"/>
</dbReference>
<dbReference type="GlyGen" id="P12645">
    <property type="glycosylation" value="11 sites, 6 N-linked glycans (2 sites), 2 O-linked glycans (6 sites)"/>
</dbReference>
<dbReference type="iPTMnet" id="P12645"/>
<dbReference type="PhosphoSitePlus" id="P12645"/>
<dbReference type="BioMuta" id="BMP3"/>
<dbReference type="DMDM" id="215273985"/>
<dbReference type="MassIVE" id="P12645"/>
<dbReference type="PaxDb" id="9606-ENSP00000282701"/>
<dbReference type="PeptideAtlas" id="P12645"/>
<dbReference type="ProteomicsDB" id="52862"/>
<dbReference type="Antibodypedia" id="25010">
    <property type="antibodies" value="484 antibodies from 35 providers"/>
</dbReference>
<dbReference type="DNASU" id="651"/>
<dbReference type="Ensembl" id="ENST00000282701.4">
    <property type="protein sequence ID" value="ENSP00000282701.2"/>
    <property type="gene ID" value="ENSG00000152785.8"/>
</dbReference>
<dbReference type="GeneID" id="651"/>
<dbReference type="KEGG" id="hsa:651"/>
<dbReference type="MANE-Select" id="ENST00000282701.4">
    <property type="protein sequence ID" value="ENSP00000282701.2"/>
    <property type="RefSeq nucleotide sequence ID" value="NM_001201.5"/>
    <property type="RefSeq protein sequence ID" value="NP_001192.4"/>
</dbReference>
<dbReference type="UCSC" id="uc003hmg.4">
    <property type="organism name" value="human"/>
</dbReference>
<dbReference type="AGR" id="HGNC:1070"/>
<dbReference type="CTD" id="651"/>
<dbReference type="DisGeNET" id="651"/>
<dbReference type="GeneCards" id="BMP3"/>
<dbReference type="HGNC" id="HGNC:1070">
    <property type="gene designation" value="BMP3"/>
</dbReference>
<dbReference type="HPA" id="ENSG00000152785">
    <property type="expression patterns" value="Tissue enhanced (intestine, lung, ovary, urinary bladder)"/>
</dbReference>
<dbReference type="MalaCards" id="BMP3"/>
<dbReference type="MIM" id="112263">
    <property type="type" value="gene"/>
</dbReference>
<dbReference type="neXtProt" id="NX_P12645"/>
<dbReference type="OpenTargets" id="ENSG00000152785"/>
<dbReference type="PharmGKB" id="PA25380"/>
<dbReference type="VEuPathDB" id="HostDB:ENSG00000152785"/>
<dbReference type="eggNOG" id="KOG3900">
    <property type="taxonomic scope" value="Eukaryota"/>
</dbReference>
<dbReference type="GeneTree" id="ENSGT00940000159775"/>
<dbReference type="HOGENOM" id="CLU_020515_10_0_1"/>
<dbReference type="InParanoid" id="P12645"/>
<dbReference type="OMA" id="HWGTINN"/>
<dbReference type="OrthoDB" id="5987191at2759"/>
<dbReference type="PAN-GO" id="P12645">
    <property type="GO annotations" value="4 GO annotations based on evolutionary models"/>
</dbReference>
<dbReference type="PhylomeDB" id="P12645"/>
<dbReference type="TreeFam" id="TF316134"/>
<dbReference type="PathwayCommons" id="P12645"/>
<dbReference type="SignaLink" id="P12645"/>
<dbReference type="BioGRID-ORCS" id="651">
    <property type="hits" value="13 hits in 1144 CRISPR screens"/>
</dbReference>
<dbReference type="EvolutionaryTrace" id="P12645"/>
<dbReference type="GeneWiki" id="Bone_morphogenetic_protein_3"/>
<dbReference type="GenomeRNAi" id="651"/>
<dbReference type="Pharos" id="P12645">
    <property type="development level" value="Tbio"/>
</dbReference>
<dbReference type="PRO" id="PR:P12645"/>
<dbReference type="Proteomes" id="UP000005640">
    <property type="component" value="Chromosome 4"/>
</dbReference>
<dbReference type="RNAct" id="P12645">
    <property type="molecule type" value="protein"/>
</dbReference>
<dbReference type="Bgee" id="ENSG00000152785">
    <property type="expression patterns" value="Expressed in muscle layer of sigmoid colon and 81 other cell types or tissues"/>
</dbReference>
<dbReference type="GO" id="GO:0070062">
    <property type="term" value="C:extracellular exosome"/>
    <property type="evidence" value="ECO:0007005"/>
    <property type="project" value="UniProtKB"/>
</dbReference>
<dbReference type="GO" id="GO:0005615">
    <property type="term" value="C:extracellular space"/>
    <property type="evidence" value="ECO:0000318"/>
    <property type="project" value="GO_Central"/>
</dbReference>
<dbReference type="GO" id="GO:0070700">
    <property type="term" value="F:BMP receptor binding"/>
    <property type="evidence" value="ECO:0000314"/>
    <property type="project" value="MGI"/>
</dbReference>
<dbReference type="GO" id="GO:0005125">
    <property type="term" value="F:cytokine activity"/>
    <property type="evidence" value="ECO:0000318"/>
    <property type="project" value="GO_Central"/>
</dbReference>
<dbReference type="GO" id="GO:0008083">
    <property type="term" value="F:growth factor activity"/>
    <property type="evidence" value="ECO:0007669"/>
    <property type="project" value="UniProtKB-KW"/>
</dbReference>
<dbReference type="GO" id="GO:0005102">
    <property type="term" value="F:signaling receptor binding"/>
    <property type="evidence" value="ECO:0000304"/>
    <property type="project" value="ProtInc"/>
</dbReference>
<dbReference type="GO" id="GO:0051216">
    <property type="term" value="P:cartilage development"/>
    <property type="evidence" value="ECO:0007669"/>
    <property type="project" value="UniProtKB-KW"/>
</dbReference>
<dbReference type="GO" id="GO:0007267">
    <property type="term" value="P:cell-cell signaling"/>
    <property type="evidence" value="ECO:0000304"/>
    <property type="project" value="ProtInc"/>
</dbReference>
<dbReference type="GO" id="GO:0030279">
    <property type="term" value="P:negative regulation of ossification"/>
    <property type="evidence" value="ECO:0000314"/>
    <property type="project" value="UniProt"/>
</dbReference>
<dbReference type="GO" id="GO:0001649">
    <property type="term" value="P:osteoblast differentiation"/>
    <property type="evidence" value="ECO:0007669"/>
    <property type="project" value="InterPro"/>
</dbReference>
<dbReference type="GO" id="GO:0045944">
    <property type="term" value="P:positive regulation of transcription by RNA polymerase II"/>
    <property type="evidence" value="ECO:0007669"/>
    <property type="project" value="Ensembl"/>
</dbReference>
<dbReference type="GO" id="GO:0001501">
    <property type="term" value="P:skeletal system development"/>
    <property type="evidence" value="ECO:0000304"/>
    <property type="project" value="ProtInc"/>
</dbReference>
<dbReference type="CDD" id="cd19393">
    <property type="entry name" value="TGF_beta_BMP3"/>
    <property type="match status" value="1"/>
</dbReference>
<dbReference type="FunFam" id="2.10.90.10:FF:000008">
    <property type="entry name" value="Bone morphogenetic protein 3"/>
    <property type="match status" value="1"/>
</dbReference>
<dbReference type="Gene3D" id="2.10.90.10">
    <property type="entry name" value="Cystine-knot cytokines"/>
    <property type="match status" value="1"/>
</dbReference>
<dbReference type="InterPro" id="IPR017197">
    <property type="entry name" value="BMP3/BMP3B"/>
</dbReference>
<dbReference type="InterPro" id="IPR029034">
    <property type="entry name" value="Cystine-knot_cytokine"/>
</dbReference>
<dbReference type="InterPro" id="IPR001839">
    <property type="entry name" value="TGF-b_C"/>
</dbReference>
<dbReference type="InterPro" id="IPR015615">
    <property type="entry name" value="TGF-beta-rel"/>
</dbReference>
<dbReference type="InterPro" id="IPR017948">
    <property type="entry name" value="TGFb_CS"/>
</dbReference>
<dbReference type="PANTHER" id="PTHR11848:SF144">
    <property type="entry name" value="BONE MORPHOGENETIC PROTEIN 3"/>
    <property type="match status" value="1"/>
</dbReference>
<dbReference type="PANTHER" id="PTHR11848">
    <property type="entry name" value="TGF-BETA FAMILY"/>
    <property type="match status" value="1"/>
</dbReference>
<dbReference type="Pfam" id="PF00019">
    <property type="entry name" value="TGF_beta"/>
    <property type="match status" value="1"/>
</dbReference>
<dbReference type="PIRSF" id="PIRSF037403">
    <property type="entry name" value="BMP3/GDF10"/>
    <property type="match status" value="1"/>
</dbReference>
<dbReference type="SMART" id="SM00204">
    <property type="entry name" value="TGFB"/>
    <property type="match status" value="1"/>
</dbReference>
<dbReference type="SUPFAM" id="SSF57501">
    <property type="entry name" value="Cystine-knot cytokines"/>
    <property type="match status" value="1"/>
</dbReference>
<dbReference type="PROSITE" id="PS00250">
    <property type="entry name" value="TGF_BETA_1"/>
    <property type="match status" value="1"/>
</dbReference>
<dbReference type="PROSITE" id="PS51362">
    <property type="entry name" value="TGF_BETA_2"/>
    <property type="match status" value="1"/>
</dbReference>
<keyword id="KW-0002">3D-structure</keyword>
<keyword id="KW-0891">Chondrogenesis</keyword>
<keyword id="KW-0165">Cleavage on pair of basic residues</keyword>
<keyword id="KW-0202">Cytokine</keyword>
<keyword id="KW-0217">Developmental protein</keyword>
<keyword id="KW-0221">Differentiation</keyword>
<keyword id="KW-1015">Disulfide bond</keyword>
<keyword id="KW-0325">Glycoprotein</keyword>
<keyword id="KW-0339">Growth factor</keyword>
<keyword id="KW-0892">Osteogenesis</keyword>
<keyword id="KW-1267">Proteomics identification</keyword>
<keyword id="KW-1185">Reference proteome</keyword>
<keyword id="KW-0964">Secreted</keyword>
<keyword id="KW-0732">Signal</keyword>
<reference key="1">
    <citation type="journal article" date="1988" name="Science">
        <title>Novel regulators of bone formation: molecular clones and activities.</title>
        <authorList>
            <person name="Wozney J.M."/>
            <person name="Rosen V."/>
            <person name="Celeste A.J."/>
            <person name="Mitsock L.M."/>
            <person name="Whitters M.J."/>
            <person name="Kriz R.W."/>
            <person name="Hewick R.M."/>
            <person name="Wang E.A."/>
        </authorList>
    </citation>
    <scope>NUCLEOTIDE SEQUENCE [MRNA]</scope>
    <scope>VARIANT PHE-205</scope>
</reference>
<reference key="2">
    <citation type="journal article" date="2005" name="Nature">
        <title>Generation and annotation of the DNA sequences of human chromosomes 2 and 4.</title>
        <authorList>
            <person name="Hillier L.W."/>
            <person name="Graves T.A."/>
            <person name="Fulton R.S."/>
            <person name="Fulton L.A."/>
            <person name="Pepin K.H."/>
            <person name="Minx P."/>
            <person name="Wagner-McPherson C."/>
            <person name="Layman D."/>
            <person name="Wylie K."/>
            <person name="Sekhon M."/>
            <person name="Becker M.C."/>
            <person name="Fewell G.A."/>
            <person name="Delehaunty K.D."/>
            <person name="Miner T.L."/>
            <person name="Nash W.E."/>
            <person name="Kremitzki C."/>
            <person name="Oddy L."/>
            <person name="Du H."/>
            <person name="Sun H."/>
            <person name="Bradshaw-Cordum H."/>
            <person name="Ali J."/>
            <person name="Carter J."/>
            <person name="Cordes M."/>
            <person name="Harris A."/>
            <person name="Isak A."/>
            <person name="van Brunt A."/>
            <person name="Nguyen C."/>
            <person name="Du F."/>
            <person name="Courtney L."/>
            <person name="Kalicki J."/>
            <person name="Ozersky P."/>
            <person name="Abbott S."/>
            <person name="Armstrong J."/>
            <person name="Belter E.A."/>
            <person name="Caruso L."/>
            <person name="Cedroni M."/>
            <person name="Cotton M."/>
            <person name="Davidson T."/>
            <person name="Desai A."/>
            <person name="Elliott G."/>
            <person name="Erb T."/>
            <person name="Fronick C."/>
            <person name="Gaige T."/>
            <person name="Haakenson W."/>
            <person name="Haglund K."/>
            <person name="Holmes A."/>
            <person name="Harkins R."/>
            <person name="Kim K."/>
            <person name="Kruchowski S.S."/>
            <person name="Strong C.M."/>
            <person name="Grewal N."/>
            <person name="Goyea E."/>
            <person name="Hou S."/>
            <person name="Levy A."/>
            <person name="Martinka S."/>
            <person name="Mead K."/>
            <person name="McLellan M.D."/>
            <person name="Meyer R."/>
            <person name="Randall-Maher J."/>
            <person name="Tomlinson C."/>
            <person name="Dauphin-Kohlberg S."/>
            <person name="Kozlowicz-Reilly A."/>
            <person name="Shah N."/>
            <person name="Swearengen-Shahid S."/>
            <person name="Snider J."/>
            <person name="Strong J.T."/>
            <person name="Thompson J."/>
            <person name="Yoakum M."/>
            <person name="Leonard S."/>
            <person name="Pearman C."/>
            <person name="Trani L."/>
            <person name="Radionenko M."/>
            <person name="Waligorski J.E."/>
            <person name="Wang C."/>
            <person name="Rock S.M."/>
            <person name="Tin-Wollam A.-M."/>
            <person name="Maupin R."/>
            <person name="Latreille P."/>
            <person name="Wendl M.C."/>
            <person name="Yang S.-P."/>
            <person name="Pohl C."/>
            <person name="Wallis J.W."/>
            <person name="Spieth J."/>
            <person name="Bieri T.A."/>
            <person name="Berkowicz N."/>
            <person name="Nelson J.O."/>
            <person name="Osborne J."/>
            <person name="Ding L."/>
            <person name="Meyer R."/>
            <person name="Sabo A."/>
            <person name="Shotland Y."/>
            <person name="Sinha P."/>
            <person name="Wohldmann P.E."/>
            <person name="Cook L.L."/>
            <person name="Hickenbotham M.T."/>
            <person name="Eldred J."/>
            <person name="Williams D."/>
            <person name="Jones T.A."/>
            <person name="She X."/>
            <person name="Ciccarelli F.D."/>
            <person name="Izaurralde E."/>
            <person name="Taylor J."/>
            <person name="Schmutz J."/>
            <person name="Myers R.M."/>
            <person name="Cox D.R."/>
            <person name="Huang X."/>
            <person name="McPherson J.D."/>
            <person name="Mardis E.R."/>
            <person name="Clifton S.W."/>
            <person name="Warren W.C."/>
            <person name="Chinwalla A.T."/>
            <person name="Eddy S.R."/>
            <person name="Marra M.A."/>
            <person name="Ovcharenko I."/>
            <person name="Furey T.S."/>
            <person name="Miller W."/>
            <person name="Eichler E.E."/>
            <person name="Bork P."/>
            <person name="Suyama M."/>
            <person name="Torrents D."/>
            <person name="Waterston R.H."/>
            <person name="Wilson R.K."/>
        </authorList>
    </citation>
    <scope>NUCLEOTIDE SEQUENCE [LARGE SCALE GENOMIC DNA]</scope>
    <scope>VARIANT PHE-205</scope>
</reference>
<reference key="3">
    <citation type="journal article" date="2004" name="Genome Res.">
        <title>The status, quality, and expansion of the NIH full-length cDNA project: the Mammalian Gene Collection (MGC).</title>
        <authorList>
            <consortium name="The MGC Project Team"/>
        </authorList>
    </citation>
    <scope>NUCLEOTIDE SEQUENCE [LARGE SCALE MRNA]</scope>
    <scope>VARIANT PHE-205</scope>
</reference>
<reference key="4">
    <citation type="journal article" date="2001" name="Nat. Genet.">
        <title>Bone morphogenetic protein-3 is a negative regulator of bone density.</title>
        <authorList>
            <person name="Daluiski A."/>
            <person name="Engstrand T."/>
            <person name="Bahamonde M.E."/>
            <person name="Gamer L.W."/>
            <person name="Agius E."/>
            <person name="Stevenson S.L."/>
            <person name="Cox K."/>
            <person name="Rosen V."/>
            <person name="Lyons K.M."/>
        </authorList>
    </citation>
    <scope>FUNCTION</scope>
</reference>
<reference key="5">
    <citation type="journal article" date="2003" name="Bone">
        <title>BMP signaling components are expressed in human fracture callus.</title>
        <authorList>
            <person name="Kloen P."/>
            <person name="Di Paola M."/>
            <person name="Borens O."/>
            <person name="Richmond J."/>
            <person name="Perino G."/>
            <person name="Helfet D.L."/>
            <person name="Goumans M.J."/>
        </authorList>
    </citation>
    <scope>INDUCTION</scope>
</reference>
<reference key="6">
    <citation type="journal article" date="2004" name="Gene Ther.">
        <title>Characterization of the distinct orthotopic bone-forming activity of 14 BMPs using recombinant adenovirus-mediated gene delivery.</title>
        <authorList>
            <person name="Kang Q."/>
            <person name="Sun M.H."/>
            <person name="Cheng H."/>
            <person name="Peng Y."/>
            <person name="Montag A.G."/>
            <person name="Deyrup A.T."/>
            <person name="Jiang W."/>
            <person name="Luu H.H."/>
            <person name="Luo J."/>
            <person name="Szatkowski J.P."/>
            <person name="Vanichakarn P."/>
            <person name="Park J.Y."/>
            <person name="Li Y."/>
            <person name="Haydon R.C."/>
            <person name="He T.-C."/>
        </authorList>
    </citation>
    <scope>FUNCTION</scope>
</reference>
<reference key="7">
    <citation type="journal article" date="2004" name="J. Orthop. Res.">
        <title>Expression of bone morphogenetic proteins, receptors, and tissue inhibitors in human fetal, adult, and osteoarthritic articular cartilage.</title>
        <authorList>
            <person name="Chen A.L."/>
            <person name="Fang C."/>
            <person name="Liu C."/>
            <person name="Leslie M.P."/>
            <person name="Chang E."/>
            <person name="Di Cesare P.E."/>
        </authorList>
    </citation>
    <scope>TISSUE SPECIFICITY</scope>
</reference>
<reference key="8">
    <citation type="journal article" date="2019" name="J. Exp. Clin. Cancer Res.">
        <title>BMP3 suppresses colon tumorigenesis via ActRIIB/SMAD2-dependent and TAK1/JNK signaling pathways.</title>
        <authorList>
            <person name="Wen J."/>
            <person name="Liu X."/>
            <person name="Qi Y."/>
            <person name="Niu F."/>
            <person name="Niu Z."/>
            <person name="Geng W."/>
            <person name="Zou Z."/>
            <person name="Huang R."/>
            <person name="Wang J."/>
            <person name="Zou H."/>
        </authorList>
    </citation>
    <scope>FUNCTION</scope>
    <scope>INTERACTION WITH ACVR2B</scope>
</reference>
<reference key="9">
    <citation type="journal article" date="2014" name="J. Proteomics">
        <title>An enzyme assisted RP-RPLC approach for in-depth analysis of human liver phosphoproteome.</title>
        <authorList>
            <person name="Bian Y."/>
            <person name="Song C."/>
            <person name="Cheng K."/>
            <person name="Dong M."/>
            <person name="Wang F."/>
            <person name="Huang J."/>
            <person name="Sun D."/>
            <person name="Wang L."/>
            <person name="Ye M."/>
            <person name="Zou H."/>
        </authorList>
    </citation>
    <scope>IDENTIFICATION BY MASS SPECTROMETRY [LARGE SCALE ANALYSIS]</scope>
    <source>
        <tissue>Liver</tissue>
    </source>
</reference>
<reference key="10">
    <citation type="journal article" date="2007" name="Biochemistry">
        <title>BMP-3 and BMP-6 structures illuminate the nature of binding specificity with receptors.</title>
        <authorList>
            <person name="Allendorph G.P."/>
            <person name="Isaacs M.J."/>
            <person name="Kawakami Y."/>
            <person name="Izpisua Belmonte J.C."/>
            <person name="Choe S."/>
        </authorList>
    </citation>
    <scope>X-RAY CRYSTALLOGRAPHY (2.21 ANGSTROMS) OF 363-472</scope>
    <scope>DISULFIDE BONDS</scope>
</reference>
<name>BMP3_HUMAN</name>
<gene>
    <name type="primary">BMP3</name>
    <name type="synonym">BMP3A</name>
</gene>
<comment type="function">
    <text evidence="4 6 11">Growth factor of the TGF-beta superfamily that plays an essential role in developmental process by inducing and patterning early skeletal formation and by negatively regulating bone density. Antagonizes the ability of certain osteogenic BMPs to induce osteoprogenitor differentiation and ossification (PubMed:11138004, PubMed:15269709). Initiates signaling cascades by associating with type II receptor ACVR2B to activate SMAD2-dependent and SMAD-independent signaling cascades including TAK1 and JNK pathways (PubMed:31665064).</text>
</comment>
<comment type="subunit">
    <text evidence="11">Homodimer; disulfide-linked. Interacts with type II receptor ACVR2B.</text>
</comment>
<comment type="subcellular location">
    <subcellularLocation>
        <location>Secreted</location>
    </subcellularLocation>
</comment>
<comment type="tissue specificity">
    <text evidence="7">Expressed in adult and fetal cartilage.</text>
</comment>
<comment type="induction">
    <text evidence="5">Highly expressed in fracture tissue, particularly in osteoblasts, osteoclasts and chondroblasts.</text>
</comment>
<comment type="similarity">
    <text evidence="13">Belongs to the TGF-beta family.</text>
</comment>
<comment type="online information" name="Wikipedia">
    <link uri="https://en.wikipedia.org/wiki/Bone_morphogenetic_protein_3"/>
    <text>Bone morphogenetic protein 3 entry</text>
</comment>
<feature type="signal peptide" evidence="2">
    <location>
        <begin position="1"/>
        <end position="22"/>
    </location>
</feature>
<feature type="propeptide" id="PRO_0000033836" evidence="1">
    <location>
        <begin position="23"/>
        <end position="362"/>
    </location>
</feature>
<feature type="chain" id="PRO_0000033837" description="Bone morphogenetic protein 3">
    <location>
        <begin position="363"/>
        <end position="472"/>
    </location>
</feature>
<feature type="region of interest" description="Disordered" evidence="3">
    <location>
        <begin position="27"/>
        <end position="53"/>
    </location>
</feature>
<feature type="region of interest" description="Disordered" evidence="3">
    <location>
        <begin position="320"/>
        <end position="350"/>
    </location>
</feature>
<feature type="compositionally biased region" description="Basic and acidic residues" evidence="3">
    <location>
        <begin position="27"/>
        <end position="37"/>
    </location>
</feature>
<feature type="compositionally biased region" description="Basic residues" evidence="3">
    <location>
        <begin position="333"/>
        <end position="346"/>
    </location>
</feature>
<feature type="glycosylation site" description="N-linked (GlcNAc...) asparagine" evidence="2">
    <location>
        <position position="117"/>
    </location>
</feature>
<feature type="glycosylation site" description="N-linked (GlcNAc...) asparagine" evidence="2">
    <location>
        <position position="141"/>
    </location>
</feature>
<feature type="glycosylation site" description="N-linked (GlcNAc...) asparagine" evidence="2">
    <location>
        <position position="175"/>
    </location>
</feature>
<feature type="glycosylation site" description="N-linked (GlcNAc...) asparagine" evidence="2">
    <location>
        <position position="220"/>
    </location>
</feature>
<feature type="glycosylation site" description="N-linked (GlcNAc...) asparagine" evidence="2">
    <location>
        <position position="463"/>
    </location>
</feature>
<feature type="disulfide bond" evidence="10">
    <location>
        <begin position="370"/>
        <end position="437"/>
    </location>
</feature>
<feature type="disulfide bond" evidence="10">
    <location>
        <begin position="399"/>
        <end position="469"/>
    </location>
</feature>
<feature type="disulfide bond" evidence="10">
    <location>
        <begin position="403"/>
        <end position="471"/>
    </location>
</feature>
<feature type="disulfide bond" description="Interchain" evidence="10">
    <location>
        <position position="436"/>
    </location>
</feature>
<feature type="sequence variant" id="VAR_047418" description="In dbSNP:rs34213771.">
    <original>Q</original>
    <variation>K</variation>
    <location>
        <position position="176"/>
    </location>
</feature>
<feature type="sequence variant" id="VAR_047419" description="In dbSNP:rs34847147.">
    <original>Q</original>
    <variation>L</variation>
    <location>
        <position position="176"/>
    </location>
</feature>
<feature type="sequence variant" id="VAR_020063" description="In dbSNP:rs3733549.">
    <original>R</original>
    <variation>Q</variation>
    <location>
        <position position="192"/>
    </location>
</feature>
<feature type="sequence variant" id="VAR_047420" description="In dbSNP:rs6831040." evidence="8 9 12">
    <original>L</original>
    <variation>F</variation>
    <location>
        <position position="205"/>
    </location>
</feature>
<feature type="sequence variant" id="VAR_047421" description="In dbSNP:rs34505126.">
    <original>T</original>
    <variation>M</variation>
    <location>
        <position position="222"/>
    </location>
</feature>
<feature type="strand" evidence="14">
    <location>
        <begin position="368"/>
        <end position="373"/>
    </location>
</feature>
<feature type="strand" evidence="14">
    <location>
        <begin position="376"/>
        <end position="378"/>
    </location>
</feature>
<feature type="turn" evidence="14">
    <location>
        <begin position="379"/>
        <end position="383"/>
    </location>
</feature>
<feature type="turn" evidence="14">
    <location>
        <begin position="385"/>
        <end position="387"/>
    </location>
</feature>
<feature type="strand" evidence="14">
    <location>
        <begin position="388"/>
        <end position="390"/>
    </location>
</feature>
<feature type="strand" evidence="14">
    <location>
        <begin position="392"/>
        <end position="395"/>
    </location>
</feature>
<feature type="strand" evidence="14">
    <location>
        <begin position="398"/>
        <end position="400"/>
    </location>
</feature>
<feature type="helix" evidence="14">
    <location>
        <begin position="409"/>
        <end position="411"/>
    </location>
</feature>
<feature type="helix" evidence="14">
    <location>
        <begin position="415"/>
        <end position="425"/>
    </location>
</feature>
<feature type="strand" evidence="14">
    <location>
        <begin position="437"/>
        <end position="439"/>
    </location>
</feature>
<feature type="strand" evidence="14">
    <location>
        <begin position="441"/>
        <end position="450"/>
    </location>
</feature>
<feature type="strand" evidence="14">
    <location>
        <begin position="456"/>
        <end position="466"/>
    </location>
</feature>
<feature type="strand" evidence="14">
    <location>
        <begin position="469"/>
        <end position="471"/>
    </location>
</feature>
<accession>P12645</accession>
<accession>Q4VAS5</accession>
<evidence type="ECO:0000250" key="1"/>
<evidence type="ECO:0000255" key="2"/>
<evidence type="ECO:0000256" key="3">
    <source>
        <dbReference type="SAM" id="MobiDB-lite"/>
    </source>
</evidence>
<evidence type="ECO:0000269" key="4">
    <source>
    </source>
</evidence>
<evidence type="ECO:0000269" key="5">
    <source>
    </source>
</evidence>
<evidence type="ECO:0000269" key="6">
    <source>
    </source>
</evidence>
<evidence type="ECO:0000269" key="7">
    <source>
    </source>
</evidence>
<evidence type="ECO:0000269" key="8">
    <source>
    </source>
</evidence>
<evidence type="ECO:0000269" key="9">
    <source>
    </source>
</evidence>
<evidence type="ECO:0000269" key="10">
    <source>
    </source>
</evidence>
<evidence type="ECO:0000269" key="11">
    <source>
    </source>
</evidence>
<evidence type="ECO:0000269" key="12">
    <source>
    </source>
</evidence>
<evidence type="ECO:0000305" key="13"/>
<evidence type="ECO:0007829" key="14">
    <source>
        <dbReference type="PDB" id="2QCQ"/>
    </source>
</evidence>